<reference key="1">
    <citation type="journal article" date="2002" name="Nucleic Acids Res.">
        <title>Genome sequence of Shigella flexneri 2a: insights into pathogenicity through comparison with genomes of Escherichia coli K12 and O157.</title>
        <authorList>
            <person name="Jin Q."/>
            <person name="Yuan Z."/>
            <person name="Xu J."/>
            <person name="Wang Y."/>
            <person name="Shen Y."/>
            <person name="Lu W."/>
            <person name="Wang J."/>
            <person name="Liu H."/>
            <person name="Yang J."/>
            <person name="Yang F."/>
            <person name="Zhang X."/>
            <person name="Zhang J."/>
            <person name="Yang G."/>
            <person name="Wu H."/>
            <person name="Qu D."/>
            <person name="Dong J."/>
            <person name="Sun L."/>
            <person name="Xue Y."/>
            <person name="Zhao A."/>
            <person name="Gao Y."/>
            <person name="Zhu J."/>
            <person name="Kan B."/>
            <person name="Ding K."/>
            <person name="Chen S."/>
            <person name="Cheng H."/>
            <person name="Yao Z."/>
            <person name="He B."/>
            <person name="Chen R."/>
            <person name="Ma D."/>
            <person name="Qiang B."/>
            <person name="Wen Y."/>
            <person name="Hou Y."/>
            <person name="Yu J."/>
        </authorList>
    </citation>
    <scope>NUCLEOTIDE SEQUENCE [LARGE SCALE GENOMIC DNA]</scope>
    <source>
        <strain>301 / Serotype 2a</strain>
    </source>
</reference>
<reference key="2">
    <citation type="journal article" date="2003" name="Infect. Immun.">
        <title>Complete genome sequence and comparative genomics of Shigella flexneri serotype 2a strain 2457T.</title>
        <authorList>
            <person name="Wei J."/>
            <person name="Goldberg M.B."/>
            <person name="Burland V."/>
            <person name="Venkatesan M.M."/>
            <person name="Deng W."/>
            <person name="Fournier G."/>
            <person name="Mayhew G.F."/>
            <person name="Plunkett G. III"/>
            <person name="Rose D.J."/>
            <person name="Darling A."/>
            <person name="Mau B."/>
            <person name="Perna N.T."/>
            <person name="Payne S.M."/>
            <person name="Runyen-Janecky L.J."/>
            <person name="Zhou S."/>
            <person name="Schwartz D.C."/>
            <person name="Blattner F.R."/>
        </authorList>
    </citation>
    <scope>NUCLEOTIDE SEQUENCE [LARGE SCALE GENOMIC DNA]</scope>
    <source>
        <strain>ATCC 700930 / 2457T / Serotype 2a</strain>
    </source>
</reference>
<comment type="function">
    <text evidence="1">Catalyzes the transfer of succinyl-CoA to arginine to produce N(2)-succinylarginine.</text>
</comment>
<comment type="catalytic activity">
    <reaction evidence="1">
        <text>succinyl-CoA + L-arginine = N(2)-succinyl-L-arginine + CoA + H(+)</text>
        <dbReference type="Rhea" id="RHEA:15185"/>
        <dbReference type="ChEBI" id="CHEBI:15378"/>
        <dbReference type="ChEBI" id="CHEBI:32682"/>
        <dbReference type="ChEBI" id="CHEBI:57287"/>
        <dbReference type="ChEBI" id="CHEBI:57292"/>
        <dbReference type="ChEBI" id="CHEBI:58241"/>
        <dbReference type="EC" id="2.3.1.109"/>
    </reaction>
</comment>
<comment type="pathway">
    <text evidence="1">Amino-acid degradation; L-arginine degradation via AST pathway; L-glutamate and succinate from L-arginine: step 1/5.</text>
</comment>
<comment type="similarity">
    <text evidence="1">Belongs to the arginine N-succinyltransferase family.</text>
</comment>
<comment type="sequence caution" evidence="2">
    <conflict type="erroneous initiation">
        <sequence resource="EMBL-CDS" id="AAN43072"/>
    </conflict>
</comment>
<comment type="sequence caution" evidence="2">
    <conflict type="erroneous initiation">
        <sequence resource="EMBL-CDS" id="AAP16965"/>
    </conflict>
</comment>
<gene>
    <name evidence="1" type="primary">astA</name>
    <name type="ordered locus">SF1479</name>
    <name type="ordered locus">S1596</name>
</gene>
<accession>Q83L52</accession>
<accession>Q7UCI8</accession>
<keyword id="KW-0012">Acyltransferase</keyword>
<keyword id="KW-0056">Arginine metabolism</keyword>
<keyword id="KW-1185">Reference proteome</keyword>
<keyword id="KW-0808">Transferase</keyword>
<sequence>MMVIRPVERSDVSALMQLASKTGGGLTSLPANEATLSARIERAIKTWQGELPKSEQGYVFVLEDSETGTVAGICAIEVAVGLNDPWYNYRVGTLVHASKELNVYNALPTLFLSNDHTGSSELCTLFLDPDWRKEGNGYLLSKSRFMFMAAFRDKFNDKVVAEMRGVIDEHGYSPFWQSLGKRFFSMDFSRADFLCGTGQKAFIAELMPKHPIYTHFLSQEAQDVIGQVHPQTAPARAVLEKEGFRYRNYIDIFDGGPTLECDIDRVRAIRKSRLVEVAEGQPAQGDFPACLVANENYHHFRVVLARTDPATERLILTAAQLDALKCHAGDRVRLVRLCAEEKTA</sequence>
<name>ASTA_SHIFL</name>
<feature type="chain" id="PRO_0000262332" description="Arginine N-succinyltransferase">
    <location>
        <begin position="1"/>
        <end position="344"/>
    </location>
</feature>
<feature type="active site" description="Proton donor" evidence="1">
    <location>
        <position position="229"/>
    </location>
</feature>
<feature type="binding site" evidence="1">
    <location>
        <position position="125"/>
    </location>
    <ligand>
        <name>succinyl-CoA</name>
        <dbReference type="ChEBI" id="CHEBI:57292"/>
    </ligand>
</feature>
<protein>
    <recommendedName>
        <fullName evidence="1">Arginine N-succinyltransferase</fullName>
        <shortName evidence="1">AST</shortName>
        <ecNumber evidence="1">2.3.1.109</ecNumber>
    </recommendedName>
    <alternativeName>
        <fullName evidence="1">AOST</fullName>
    </alternativeName>
</protein>
<proteinExistence type="inferred from homology"/>
<dbReference type="EC" id="2.3.1.109" evidence="1"/>
<dbReference type="EMBL" id="AE005674">
    <property type="protein sequence ID" value="AAN43072.2"/>
    <property type="status" value="ALT_INIT"/>
    <property type="molecule type" value="Genomic_DNA"/>
</dbReference>
<dbReference type="EMBL" id="AE014073">
    <property type="protein sequence ID" value="AAP16965.1"/>
    <property type="status" value="ALT_INIT"/>
    <property type="molecule type" value="Genomic_DNA"/>
</dbReference>
<dbReference type="RefSeq" id="NP_707365.2">
    <property type="nucleotide sequence ID" value="NC_004337.2"/>
</dbReference>
<dbReference type="RefSeq" id="WP_000989414.1">
    <property type="nucleotide sequence ID" value="NZ_WPGW01000081.1"/>
</dbReference>
<dbReference type="SMR" id="Q83L52"/>
<dbReference type="STRING" id="198214.SF1479"/>
<dbReference type="PaxDb" id="198214-SF1479"/>
<dbReference type="GeneID" id="1024657"/>
<dbReference type="GeneID" id="75203053"/>
<dbReference type="KEGG" id="sfl:SF1479"/>
<dbReference type="KEGG" id="sfx:S1596"/>
<dbReference type="PATRIC" id="fig|198214.7.peg.1745"/>
<dbReference type="HOGENOM" id="CLU_057655_0_0_6"/>
<dbReference type="UniPathway" id="UPA00185">
    <property type="reaction ID" value="UER00279"/>
</dbReference>
<dbReference type="Proteomes" id="UP000001006">
    <property type="component" value="Chromosome"/>
</dbReference>
<dbReference type="Proteomes" id="UP000002673">
    <property type="component" value="Chromosome"/>
</dbReference>
<dbReference type="GO" id="GO:0008791">
    <property type="term" value="F:arginine N-succinyltransferase activity"/>
    <property type="evidence" value="ECO:0007669"/>
    <property type="project" value="UniProtKB-UniRule"/>
</dbReference>
<dbReference type="GO" id="GO:0019544">
    <property type="term" value="P:arginine catabolic process to glutamate"/>
    <property type="evidence" value="ECO:0007669"/>
    <property type="project" value="UniProtKB-UniRule"/>
</dbReference>
<dbReference type="GO" id="GO:0019545">
    <property type="term" value="P:arginine catabolic process to succinate"/>
    <property type="evidence" value="ECO:0007669"/>
    <property type="project" value="UniProtKB-UniRule"/>
</dbReference>
<dbReference type="Gene3D" id="2.40.40.20">
    <property type="match status" value="1"/>
</dbReference>
<dbReference type="Gene3D" id="3.40.630.30">
    <property type="match status" value="1"/>
</dbReference>
<dbReference type="HAMAP" id="MF_01171">
    <property type="entry name" value="AstA"/>
    <property type="match status" value="1"/>
</dbReference>
<dbReference type="InterPro" id="IPR016181">
    <property type="entry name" value="Acyl_CoA_acyltransferase"/>
</dbReference>
<dbReference type="InterPro" id="IPR007041">
    <property type="entry name" value="Arg_succinylTrfase_AstA/AruG"/>
</dbReference>
<dbReference type="InterPro" id="IPR017650">
    <property type="entry name" value="Arginine_N-succinylTrfase"/>
</dbReference>
<dbReference type="NCBIfam" id="TIGR03243">
    <property type="entry name" value="arg_catab_AOST"/>
    <property type="match status" value="1"/>
</dbReference>
<dbReference type="NCBIfam" id="TIGR03244">
    <property type="entry name" value="arg_catab_AstA"/>
    <property type="match status" value="1"/>
</dbReference>
<dbReference type="NCBIfam" id="NF007770">
    <property type="entry name" value="PRK10456.1"/>
    <property type="match status" value="1"/>
</dbReference>
<dbReference type="PANTHER" id="PTHR30420:SF1">
    <property type="entry name" value="ARGININE N-SUCCINYLTRANSFERASE"/>
    <property type="match status" value="1"/>
</dbReference>
<dbReference type="PANTHER" id="PTHR30420">
    <property type="entry name" value="N-SUCCINYLARGININE DIHYDROLASE"/>
    <property type="match status" value="1"/>
</dbReference>
<dbReference type="Pfam" id="PF04958">
    <property type="entry name" value="AstA"/>
    <property type="match status" value="1"/>
</dbReference>
<dbReference type="SUPFAM" id="SSF55729">
    <property type="entry name" value="Acyl-CoA N-acyltransferases (Nat)"/>
    <property type="match status" value="1"/>
</dbReference>
<organism>
    <name type="scientific">Shigella flexneri</name>
    <dbReference type="NCBI Taxonomy" id="623"/>
    <lineage>
        <taxon>Bacteria</taxon>
        <taxon>Pseudomonadati</taxon>
        <taxon>Pseudomonadota</taxon>
        <taxon>Gammaproteobacteria</taxon>
        <taxon>Enterobacterales</taxon>
        <taxon>Enterobacteriaceae</taxon>
        <taxon>Shigella</taxon>
    </lineage>
</organism>
<evidence type="ECO:0000255" key="1">
    <source>
        <dbReference type="HAMAP-Rule" id="MF_01171"/>
    </source>
</evidence>
<evidence type="ECO:0000305" key="2"/>